<accession>Q3E770</accession>
<accession>D6VPP5</accession>
<gene>
    <name type="primary">PAU9</name>
    <name type="ordered locus">YBL108C-A</name>
</gene>
<sequence>MVKLTSIAAGVAAIAATASATTTLAQSDERVNLVELGVYVSDIRAHLAQYYMFQAAHPTETYPVEVAEAVFNYGDFTTMLTGIAPDQVTRMITGVPWYSSRLKPAISSALSKDGIYTIAN</sequence>
<name>PAU9_YEAST</name>
<feature type="signal peptide" evidence="1">
    <location>
        <begin position="1"/>
        <end position="20"/>
    </location>
</feature>
<feature type="chain" id="PRO_0000248410" description="Seripauperin-9">
    <location>
        <begin position="21"/>
        <end position="120"/>
    </location>
</feature>
<evidence type="ECO:0000255" key="1"/>
<evidence type="ECO:0000305" key="2"/>
<proteinExistence type="inferred from homology"/>
<comment type="similarity">
    <text evidence="2">Belongs to the SRP1/TIP1 family. Seripauperin subfamily.</text>
</comment>
<comment type="sequence caution" evidence="2">
    <conflict type="frameshift">
        <sequence resource="EMBL-CDS" id="DAA07015"/>
    </conflict>
</comment>
<comment type="sequence caution" evidence="2">
    <conflict type="frameshift">
        <sequence resource="EMBL" id="Z35869"/>
    </conflict>
</comment>
<reference key="1">
    <citation type="journal article" date="1994" name="EMBO J.">
        <title>Complete DNA sequence of yeast chromosome II.</title>
        <authorList>
            <person name="Feldmann H."/>
            <person name="Aigle M."/>
            <person name="Aljinovic G."/>
            <person name="Andre B."/>
            <person name="Baclet M.C."/>
            <person name="Barthe C."/>
            <person name="Baur A."/>
            <person name="Becam A.-M."/>
            <person name="Biteau N."/>
            <person name="Boles E."/>
            <person name="Brandt T."/>
            <person name="Brendel M."/>
            <person name="Brueckner M."/>
            <person name="Bussereau F."/>
            <person name="Christiansen C."/>
            <person name="Contreras R."/>
            <person name="Crouzet M."/>
            <person name="Cziepluch C."/>
            <person name="Demolis N."/>
            <person name="Delaveau T."/>
            <person name="Doignon F."/>
            <person name="Domdey H."/>
            <person name="Duesterhus S."/>
            <person name="Dubois E."/>
            <person name="Dujon B."/>
            <person name="El Bakkoury M."/>
            <person name="Entian K.-D."/>
            <person name="Feuermann M."/>
            <person name="Fiers W."/>
            <person name="Fobo G.M."/>
            <person name="Fritz C."/>
            <person name="Gassenhuber J."/>
            <person name="Glansdorff N."/>
            <person name="Goffeau A."/>
            <person name="Grivell L.A."/>
            <person name="de Haan M."/>
            <person name="Hein C."/>
            <person name="Herbert C.J."/>
            <person name="Hollenberg C.P."/>
            <person name="Holmstroem K."/>
            <person name="Jacq C."/>
            <person name="Jacquet M."/>
            <person name="Jauniaux J.-C."/>
            <person name="Jonniaux J.-L."/>
            <person name="Kallesoee T."/>
            <person name="Kiesau P."/>
            <person name="Kirchrath L."/>
            <person name="Koetter P."/>
            <person name="Korol S."/>
            <person name="Liebl S."/>
            <person name="Logghe M."/>
            <person name="Lohan A.J.E."/>
            <person name="Louis E.J."/>
            <person name="Li Z.Y."/>
            <person name="Maat M.J."/>
            <person name="Mallet L."/>
            <person name="Mannhaupt G."/>
            <person name="Messenguy F."/>
            <person name="Miosga T."/>
            <person name="Molemans F."/>
            <person name="Mueller S."/>
            <person name="Nasr F."/>
            <person name="Obermaier B."/>
            <person name="Perea J."/>
            <person name="Pierard A."/>
            <person name="Piravandi E."/>
            <person name="Pohl F.M."/>
            <person name="Pohl T.M."/>
            <person name="Potier S."/>
            <person name="Proft M."/>
            <person name="Purnelle B."/>
            <person name="Ramezani Rad M."/>
            <person name="Rieger M."/>
            <person name="Rose M."/>
            <person name="Schaaff-Gerstenschlaeger I."/>
            <person name="Scherens B."/>
            <person name="Schwarzlose C."/>
            <person name="Skala J."/>
            <person name="Slonimski P.P."/>
            <person name="Smits P.H.M."/>
            <person name="Souciet J.-L."/>
            <person name="Steensma H.Y."/>
            <person name="Stucka R."/>
            <person name="Urrestarazu L.A."/>
            <person name="van der Aart Q.J.M."/>
            <person name="Van Dyck L."/>
            <person name="Vassarotti A."/>
            <person name="Vetter I."/>
            <person name="Vierendeels F."/>
            <person name="Vissers S."/>
            <person name="Wagner G."/>
            <person name="de Wergifosse P."/>
            <person name="Wolfe K.H."/>
            <person name="Zagulski M."/>
            <person name="Zimmermann F.K."/>
            <person name="Mewes H.-W."/>
            <person name="Kleine K."/>
        </authorList>
    </citation>
    <scope>NUCLEOTIDE SEQUENCE [LARGE SCALE GENOMIC DNA]</scope>
    <source>
        <strain>ATCC 204508 / S288c</strain>
    </source>
</reference>
<reference key="2">
    <citation type="journal article" date="2014" name="G3 (Bethesda)">
        <title>The reference genome sequence of Saccharomyces cerevisiae: Then and now.</title>
        <authorList>
            <person name="Engel S.R."/>
            <person name="Dietrich F.S."/>
            <person name="Fisk D.G."/>
            <person name="Binkley G."/>
            <person name="Balakrishnan R."/>
            <person name="Costanzo M.C."/>
            <person name="Dwight S.S."/>
            <person name="Hitz B.C."/>
            <person name="Karra K."/>
            <person name="Nash R.S."/>
            <person name="Weng S."/>
            <person name="Wong E.D."/>
            <person name="Lloyd P."/>
            <person name="Skrzypek M.S."/>
            <person name="Miyasato S.R."/>
            <person name="Simison M."/>
            <person name="Cherry J.M."/>
        </authorList>
    </citation>
    <scope>GENOME REANNOTATION</scope>
    <source>
        <strain>ATCC 204508 / S288c</strain>
    </source>
</reference>
<reference key="3">
    <citation type="journal article" date="2009" name="Microbiology">
        <title>Functional analyses of PAU genes in Saccharomyces cerevisiae.</title>
        <authorList>
            <person name="Luo Z."/>
            <person name="van Vuuren H.J."/>
        </authorList>
    </citation>
    <scope>IDENTIFICATION OF FRAMESHIFT</scope>
    <source>
        <strain>ATCC 201389 / BY4742</strain>
    </source>
</reference>
<organism>
    <name type="scientific">Saccharomyces cerevisiae (strain ATCC 204508 / S288c)</name>
    <name type="common">Baker's yeast</name>
    <dbReference type="NCBI Taxonomy" id="559292"/>
    <lineage>
        <taxon>Eukaryota</taxon>
        <taxon>Fungi</taxon>
        <taxon>Dikarya</taxon>
        <taxon>Ascomycota</taxon>
        <taxon>Saccharomycotina</taxon>
        <taxon>Saccharomycetes</taxon>
        <taxon>Saccharomycetales</taxon>
        <taxon>Saccharomycetaceae</taxon>
        <taxon>Saccharomyces</taxon>
    </lineage>
</organism>
<protein>
    <recommendedName>
        <fullName>Seripauperin-9</fullName>
    </recommendedName>
</protein>
<dbReference type="EMBL" id="Z35869">
    <property type="status" value="NOT_ANNOTATED_CDS"/>
    <property type="molecule type" value="Genomic_DNA"/>
</dbReference>
<dbReference type="EMBL" id="BK006936">
    <property type="protein sequence ID" value="DAA07015.1"/>
    <property type="status" value="ALT_FRAME"/>
    <property type="molecule type" value="Genomic_DNA"/>
</dbReference>
<dbReference type="BioGRID" id="31761">
    <property type="interactions" value="53"/>
</dbReference>
<dbReference type="BioGRID" id="32594">
    <property type="interactions" value="14"/>
</dbReference>
<dbReference type="BioGRID" id="33018">
    <property type="interactions" value="32"/>
</dbReference>
<dbReference type="FunCoup" id="Q3E770">
    <property type="interactions" value="16"/>
</dbReference>
<dbReference type="EnsemblFungi" id="YAL068C_mRNA">
    <property type="protein sequence ID" value="YAL068C"/>
    <property type="gene ID" value="YAL068C"/>
</dbReference>
<dbReference type="EnsemblFungi" id="YGL261C_mRNA">
    <property type="protein sequence ID" value="YGL261C"/>
    <property type="gene ID" value="YGL261C"/>
</dbReference>
<dbReference type="KEGG" id="sce:YAL068C"/>
<dbReference type="KEGG" id="sce:YGL261C"/>
<dbReference type="AGR" id="SGD:S000007592"/>
<dbReference type="SGD" id="S000007592">
    <property type="gene designation" value="PAU9"/>
</dbReference>
<dbReference type="VEuPathDB" id="FungiDB:YAL068C"/>
<dbReference type="VEuPathDB" id="FungiDB:YGL261C"/>
<dbReference type="GeneTree" id="ENSGT00940000176276"/>
<dbReference type="HOGENOM" id="CLU_136376_0_0_1"/>
<dbReference type="InParanoid" id="Q3E770"/>
<dbReference type="OrthoDB" id="4059055at2759"/>
<dbReference type="BioCyc" id="YEAST:G3O-29252-MONOMER"/>
<dbReference type="PRO" id="PR:Q3E770"/>
<dbReference type="Proteomes" id="UP000002311">
    <property type="component" value="Chromosome II"/>
</dbReference>
<dbReference type="RNAct" id="Q3E770">
    <property type="molecule type" value="protein"/>
</dbReference>
<dbReference type="ExpressionAtlas" id="Q3E770">
    <property type="expression patterns" value="baseline"/>
</dbReference>
<dbReference type="GO" id="GO:0009277">
    <property type="term" value="C:fungal-type cell wall"/>
    <property type="evidence" value="ECO:0000318"/>
    <property type="project" value="GO_Central"/>
</dbReference>
<dbReference type="GO" id="GO:0005199">
    <property type="term" value="F:structural constituent of cell wall"/>
    <property type="evidence" value="ECO:0000318"/>
    <property type="project" value="GO_Central"/>
</dbReference>
<dbReference type="GO" id="GO:0031505">
    <property type="term" value="P:fungal-type cell wall organization"/>
    <property type="evidence" value="ECO:0000318"/>
    <property type="project" value="GO_Central"/>
</dbReference>
<dbReference type="InterPro" id="IPR000992">
    <property type="entry name" value="SRP1_TIP1"/>
</dbReference>
<dbReference type="InterPro" id="IPR050788">
    <property type="entry name" value="Yeast_SRP1/TIP1_CWP"/>
</dbReference>
<dbReference type="PANTHER" id="PTHR31002:SF34">
    <property type="entry name" value="CELL WALL PROTEIN CWP1-RELATED"/>
    <property type="match status" value="1"/>
</dbReference>
<dbReference type="PANTHER" id="PTHR31002">
    <property type="entry name" value="SERIPAUPERIN"/>
    <property type="match status" value="1"/>
</dbReference>
<dbReference type="Pfam" id="PF00660">
    <property type="entry name" value="SRP1_TIP1"/>
    <property type="match status" value="1"/>
</dbReference>
<dbReference type="PROSITE" id="PS00724">
    <property type="entry name" value="SRP1_TIP1"/>
    <property type="match status" value="1"/>
</dbReference>
<keyword id="KW-1185">Reference proteome</keyword>
<keyword id="KW-0732">Signal</keyword>